<evidence type="ECO:0000255" key="1">
    <source>
        <dbReference type="HAMAP-Rule" id="MF_00921"/>
    </source>
</evidence>
<comment type="function">
    <text evidence="1">Bifunctional serine/threonine kinase and phosphorylase involved in the regulation of the pyruvate, phosphate dikinase (PPDK) by catalyzing its phosphorylation/dephosphorylation.</text>
</comment>
<comment type="catalytic activity">
    <reaction evidence="1">
        <text>N(tele)-phospho-L-histidyl/L-threonyl-[pyruvate, phosphate dikinase] + ADP = N(tele)-phospho-L-histidyl/O-phospho-L-threonyl-[pyruvate, phosphate dikinase] + AMP + H(+)</text>
        <dbReference type="Rhea" id="RHEA:43692"/>
        <dbReference type="Rhea" id="RHEA-COMP:10650"/>
        <dbReference type="Rhea" id="RHEA-COMP:10651"/>
        <dbReference type="ChEBI" id="CHEBI:15378"/>
        <dbReference type="ChEBI" id="CHEBI:30013"/>
        <dbReference type="ChEBI" id="CHEBI:61977"/>
        <dbReference type="ChEBI" id="CHEBI:83586"/>
        <dbReference type="ChEBI" id="CHEBI:456215"/>
        <dbReference type="ChEBI" id="CHEBI:456216"/>
        <dbReference type="EC" id="2.7.11.32"/>
    </reaction>
</comment>
<comment type="catalytic activity">
    <reaction evidence="1">
        <text>N(tele)-phospho-L-histidyl/O-phospho-L-threonyl-[pyruvate, phosphate dikinase] + phosphate + H(+) = N(tele)-phospho-L-histidyl/L-threonyl-[pyruvate, phosphate dikinase] + diphosphate</text>
        <dbReference type="Rhea" id="RHEA:43696"/>
        <dbReference type="Rhea" id="RHEA-COMP:10650"/>
        <dbReference type="Rhea" id="RHEA-COMP:10651"/>
        <dbReference type="ChEBI" id="CHEBI:15378"/>
        <dbReference type="ChEBI" id="CHEBI:30013"/>
        <dbReference type="ChEBI" id="CHEBI:33019"/>
        <dbReference type="ChEBI" id="CHEBI:43474"/>
        <dbReference type="ChEBI" id="CHEBI:61977"/>
        <dbReference type="ChEBI" id="CHEBI:83586"/>
        <dbReference type="EC" id="2.7.4.27"/>
    </reaction>
</comment>
<comment type="similarity">
    <text evidence="1">Belongs to the pyruvate, phosphate/water dikinase regulatory protein family. PDRP subfamily.</text>
</comment>
<sequence length="270" mass="30166">MKKEIIVYTISDSLGETSQKLLAAASAQYPDISFLNRYNFSFVTTEEELLEILKDALKDKALVVSTLVSKQLITAAKEFSERTGLLYLDLMAPFFELIQAKAGVDPIEEPGRRHQLDRAYFDKISAIEFAVKYDDGKNPQGFLDSDILLLGVSRTSKTPVSMYLANQGYRVSNLPLIPEVPLPPILEEMDPQKMIGLVCSPETLGQIRSSRLASLGLGNETSYTNVERIEQELAYAEEIFAKYGIPVIDVTAKSVEETAFLIKEKLDERN</sequence>
<feature type="chain" id="PRO_0000196656" description="Putative pyruvate, phosphate dikinase regulatory protein 1">
    <location>
        <begin position="1"/>
        <end position="270"/>
    </location>
</feature>
<feature type="binding site" evidence="1">
    <location>
        <begin position="151"/>
        <end position="158"/>
    </location>
    <ligand>
        <name>ADP</name>
        <dbReference type="ChEBI" id="CHEBI:456216"/>
    </ligand>
</feature>
<accession>Q836T1</accession>
<reference key="1">
    <citation type="journal article" date="2003" name="Science">
        <title>Role of mobile DNA in the evolution of vancomycin-resistant Enterococcus faecalis.</title>
        <authorList>
            <person name="Paulsen I.T."/>
            <person name="Banerjei L."/>
            <person name="Myers G.S.A."/>
            <person name="Nelson K.E."/>
            <person name="Seshadri R."/>
            <person name="Read T.D."/>
            <person name="Fouts D.E."/>
            <person name="Eisen J.A."/>
            <person name="Gill S.R."/>
            <person name="Heidelberg J.F."/>
            <person name="Tettelin H."/>
            <person name="Dodson R.J."/>
            <person name="Umayam L.A."/>
            <person name="Brinkac L.M."/>
            <person name="Beanan M.J."/>
            <person name="Daugherty S.C."/>
            <person name="DeBoy R.T."/>
            <person name="Durkin S.A."/>
            <person name="Kolonay J.F."/>
            <person name="Madupu R."/>
            <person name="Nelson W.C."/>
            <person name="Vamathevan J.J."/>
            <person name="Tran B."/>
            <person name="Upton J."/>
            <person name="Hansen T."/>
            <person name="Shetty J."/>
            <person name="Khouri H.M."/>
            <person name="Utterback T.R."/>
            <person name="Radune D."/>
            <person name="Ketchum K.A."/>
            <person name="Dougherty B.A."/>
            <person name="Fraser C.M."/>
        </authorList>
    </citation>
    <scope>NUCLEOTIDE SEQUENCE [LARGE SCALE GENOMIC DNA]</scope>
    <source>
        <strain>ATCC 700802 / V583</strain>
    </source>
</reference>
<protein>
    <recommendedName>
        <fullName evidence="1">Putative pyruvate, phosphate dikinase regulatory protein 1</fullName>
        <shortName evidence="1">PPDK regulatory protein 1</shortName>
        <ecNumber evidence="1">2.7.11.32</ecNumber>
        <ecNumber evidence="1">2.7.4.27</ecNumber>
    </recommendedName>
</protein>
<proteinExistence type="inferred from homology"/>
<gene>
    <name type="ordered locus">EF_1026</name>
</gene>
<name>PDRP1_ENTFA</name>
<keyword id="KW-0418">Kinase</keyword>
<keyword id="KW-0547">Nucleotide-binding</keyword>
<keyword id="KW-1185">Reference proteome</keyword>
<keyword id="KW-0723">Serine/threonine-protein kinase</keyword>
<keyword id="KW-0808">Transferase</keyword>
<dbReference type="EC" id="2.7.11.32" evidence="1"/>
<dbReference type="EC" id="2.7.4.27" evidence="1"/>
<dbReference type="EMBL" id="AE016830">
    <property type="protein sequence ID" value="AAO80830.1"/>
    <property type="molecule type" value="Genomic_DNA"/>
</dbReference>
<dbReference type="RefSeq" id="NP_814760.1">
    <property type="nucleotide sequence ID" value="NC_004668.1"/>
</dbReference>
<dbReference type="RefSeq" id="WP_002355927.1">
    <property type="nucleotide sequence ID" value="NZ_KE136527.1"/>
</dbReference>
<dbReference type="SMR" id="Q836T1"/>
<dbReference type="STRING" id="226185.EF_1026"/>
<dbReference type="EnsemblBacteria" id="AAO80830">
    <property type="protein sequence ID" value="AAO80830"/>
    <property type="gene ID" value="EF_1026"/>
</dbReference>
<dbReference type="KEGG" id="efa:EF1026"/>
<dbReference type="PATRIC" id="fig|226185.45.peg.3231"/>
<dbReference type="eggNOG" id="COG1806">
    <property type="taxonomic scope" value="Bacteria"/>
</dbReference>
<dbReference type="HOGENOM" id="CLU_046206_2_1_9"/>
<dbReference type="Proteomes" id="UP000001415">
    <property type="component" value="Chromosome"/>
</dbReference>
<dbReference type="GO" id="GO:0043531">
    <property type="term" value="F:ADP binding"/>
    <property type="evidence" value="ECO:0007669"/>
    <property type="project" value="UniProtKB-UniRule"/>
</dbReference>
<dbReference type="GO" id="GO:0005524">
    <property type="term" value="F:ATP binding"/>
    <property type="evidence" value="ECO:0007669"/>
    <property type="project" value="InterPro"/>
</dbReference>
<dbReference type="GO" id="GO:0016776">
    <property type="term" value="F:phosphotransferase activity, phosphate group as acceptor"/>
    <property type="evidence" value="ECO:0007669"/>
    <property type="project" value="UniProtKB-UniRule"/>
</dbReference>
<dbReference type="GO" id="GO:0004674">
    <property type="term" value="F:protein serine/threonine kinase activity"/>
    <property type="evidence" value="ECO:0007669"/>
    <property type="project" value="UniProtKB-UniRule"/>
</dbReference>
<dbReference type="HAMAP" id="MF_00921">
    <property type="entry name" value="PDRP"/>
    <property type="match status" value="1"/>
</dbReference>
<dbReference type="InterPro" id="IPR005177">
    <property type="entry name" value="Kinase-pyrophosphorylase"/>
</dbReference>
<dbReference type="InterPro" id="IPR026565">
    <property type="entry name" value="PPDK_reg"/>
</dbReference>
<dbReference type="NCBIfam" id="NF003742">
    <property type="entry name" value="PRK05339.1"/>
    <property type="match status" value="1"/>
</dbReference>
<dbReference type="PANTHER" id="PTHR31756">
    <property type="entry name" value="PYRUVATE, PHOSPHATE DIKINASE REGULATORY PROTEIN 1, CHLOROPLASTIC"/>
    <property type="match status" value="1"/>
</dbReference>
<dbReference type="PANTHER" id="PTHR31756:SF3">
    <property type="entry name" value="PYRUVATE, PHOSPHATE DIKINASE REGULATORY PROTEIN 1, CHLOROPLASTIC"/>
    <property type="match status" value="1"/>
</dbReference>
<dbReference type="Pfam" id="PF03618">
    <property type="entry name" value="Kinase-PPPase"/>
    <property type="match status" value="1"/>
</dbReference>
<organism>
    <name type="scientific">Enterococcus faecalis (strain ATCC 700802 / V583)</name>
    <dbReference type="NCBI Taxonomy" id="226185"/>
    <lineage>
        <taxon>Bacteria</taxon>
        <taxon>Bacillati</taxon>
        <taxon>Bacillota</taxon>
        <taxon>Bacilli</taxon>
        <taxon>Lactobacillales</taxon>
        <taxon>Enterococcaceae</taxon>
        <taxon>Enterococcus</taxon>
    </lineage>
</organism>